<keyword id="KW-0046">Antibiotic resistance</keyword>
<keyword id="KW-0997">Cell inner membrane</keyword>
<keyword id="KW-1003">Cell membrane</keyword>
<keyword id="KW-0472">Membrane</keyword>
<keyword id="KW-0812">Transmembrane</keyword>
<keyword id="KW-1133">Transmembrane helix</keyword>
<keyword id="KW-0813">Transport</keyword>
<sequence length="512" mass="57149">MNKHVEAEWRFPAKTAWAIFAAMIFGNFMAILDIQIVASSLNEVQAGMSASRYEVTWVQTVYLIAEIIAIPMSSIVSRVLSTRVYYTMCAIGFTVSSLLCALSWNLESLLVFRGIQGFMGGGMIPTSMTALYLLFPEPKRSLPLVMFGMISTLGPAIGPTIGGWLTNNFSWHWMFLINIIPGIIIATVIYSGPNIDRANYSLIKSMDWFSLVGMAMFLGGLEYFLDEGARHDWLADTGVRIAFMVCVVGGMIFFSRSFTQPKPLLDLSVFKNKNFTLSAITTFVIGMALYGLGYMIPVFLGQVREMNSSQIGHVMMVTGIVMFCFAPFLAWLIPNFDTRKTVFVGMILAGFGVWLNSHLSIHSDYDFMFWPQIYRGIGLMICLIVVSHLAMSTLPLSKVADASGIYNLMRNIGGAVGLALINSSLDWLTAMHVTQINQSMTPQNWIFTERLDQLTAQYQEVGTNAQQIALSVIYRDIHFQALTSSFNDLLRMLAIIMFVTAFLTIFMDRGKK</sequence>
<dbReference type="EMBL" id="CP000521">
    <property type="protein sequence ID" value="ABO12199.2"/>
    <property type="molecule type" value="Genomic_DNA"/>
</dbReference>
<dbReference type="SMR" id="P0DPR7"/>
<dbReference type="KEGG" id="acb:A1S_1772"/>
<dbReference type="GO" id="GO:0005886">
    <property type="term" value="C:plasma membrane"/>
    <property type="evidence" value="ECO:0007669"/>
    <property type="project" value="UniProtKB-SubCell"/>
</dbReference>
<dbReference type="GO" id="GO:0022857">
    <property type="term" value="F:transmembrane transporter activity"/>
    <property type="evidence" value="ECO:0007669"/>
    <property type="project" value="InterPro"/>
</dbReference>
<dbReference type="GO" id="GO:0046677">
    <property type="term" value="P:response to antibiotic"/>
    <property type="evidence" value="ECO:0007669"/>
    <property type="project" value="UniProtKB-KW"/>
</dbReference>
<dbReference type="CDD" id="cd17503">
    <property type="entry name" value="MFS_LmrB_MDR_like"/>
    <property type="match status" value="1"/>
</dbReference>
<dbReference type="Gene3D" id="1.20.1250.20">
    <property type="entry name" value="MFS general substrate transporter like domains"/>
    <property type="match status" value="1"/>
</dbReference>
<dbReference type="Gene3D" id="1.20.1720.10">
    <property type="entry name" value="Multidrug resistance protein D"/>
    <property type="match status" value="1"/>
</dbReference>
<dbReference type="InterPro" id="IPR004638">
    <property type="entry name" value="EmrB-like"/>
</dbReference>
<dbReference type="InterPro" id="IPR011701">
    <property type="entry name" value="MFS"/>
</dbReference>
<dbReference type="InterPro" id="IPR020846">
    <property type="entry name" value="MFS_dom"/>
</dbReference>
<dbReference type="InterPro" id="IPR036259">
    <property type="entry name" value="MFS_trans_sf"/>
</dbReference>
<dbReference type="NCBIfam" id="TIGR00711">
    <property type="entry name" value="efflux_EmrB"/>
    <property type="match status" value="1"/>
</dbReference>
<dbReference type="PANTHER" id="PTHR42718">
    <property type="entry name" value="MAJOR FACILITATOR SUPERFAMILY MULTIDRUG TRANSPORTER MFSC"/>
    <property type="match status" value="1"/>
</dbReference>
<dbReference type="PANTHER" id="PTHR42718:SF9">
    <property type="entry name" value="MAJOR FACILITATOR SUPERFAMILY MULTIDRUG TRANSPORTER MFSC"/>
    <property type="match status" value="1"/>
</dbReference>
<dbReference type="Pfam" id="PF07690">
    <property type="entry name" value="MFS_1"/>
    <property type="match status" value="1"/>
</dbReference>
<dbReference type="SUPFAM" id="SSF103473">
    <property type="entry name" value="MFS general substrate transporter"/>
    <property type="match status" value="1"/>
</dbReference>
<dbReference type="PROSITE" id="PS50850">
    <property type="entry name" value="MFS"/>
    <property type="match status" value="1"/>
</dbReference>
<feature type="chain" id="PRO_0000445982" description="Colistin resistance protein EmrB">
    <location>
        <begin position="1"/>
        <end position="512"/>
    </location>
</feature>
<feature type="transmembrane region" description="Helical" evidence="1">
    <location>
        <begin position="17"/>
        <end position="37"/>
    </location>
</feature>
<feature type="transmembrane region" description="Helical" evidence="1">
    <location>
        <begin position="55"/>
        <end position="75"/>
    </location>
</feature>
<feature type="transmembrane region" description="Helical" evidence="1">
    <location>
        <begin position="84"/>
        <end position="104"/>
    </location>
</feature>
<feature type="transmembrane region" description="Helical" evidence="1">
    <location>
        <begin position="115"/>
        <end position="135"/>
    </location>
</feature>
<feature type="transmembrane region" description="Helical" evidence="1">
    <location>
        <begin position="144"/>
        <end position="164"/>
    </location>
</feature>
<feature type="transmembrane region" description="Helical" evidence="1">
    <location>
        <begin position="169"/>
        <end position="189"/>
    </location>
</feature>
<feature type="transmembrane region" description="Helical" evidence="1">
    <location>
        <begin position="205"/>
        <end position="225"/>
    </location>
</feature>
<feature type="transmembrane region" description="Helical" evidence="1">
    <location>
        <begin position="234"/>
        <end position="254"/>
    </location>
</feature>
<feature type="transmembrane region" description="Helical" evidence="1">
    <location>
        <begin position="280"/>
        <end position="300"/>
    </location>
</feature>
<feature type="transmembrane region" description="Helical" evidence="1">
    <location>
        <begin position="314"/>
        <end position="334"/>
    </location>
</feature>
<feature type="transmembrane region" description="Helical" evidence="1">
    <location>
        <begin position="341"/>
        <end position="361"/>
    </location>
</feature>
<feature type="transmembrane region" description="Helical" evidence="1">
    <location>
        <begin position="376"/>
        <end position="396"/>
    </location>
</feature>
<feature type="transmembrane region" description="Helical" evidence="1">
    <location>
        <begin position="412"/>
        <end position="432"/>
    </location>
</feature>
<feature type="transmembrane region" description="Helical" evidence="1">
    <location>
        <begin position="486"/>
        <end position="506"/>
    </location>
</feature>
<comment type="function">
    <text evidence="2">Probably part of an efflux pump system that contributes to adaptation to osmotic stress and resistance to colistin.</text>
</comment>
<comment type="subcellular location">
    <subcellularLocation>
        <location evidence="4">Cell inner membrane</location>
        <topology evidence="1">Multi-pass membrane protein</topology>
    </subcellularLocation>
</comment>
<comment type="induction">
    <text evidence="2">Cotranscribed with emrA. Induced during osmotic stress.</text>
</comment>
<comment type="disruption phenotype">
    <text evidence="2">Deletion of the gene significantly slows cell growth in 20% sucrose. The mutant is more susceptible to colistin, nafcillin, paromomycin, spiramycin and D,L-serine hydroxamate than the wild type.</text>
</comment>
<comment type="similarity">
    <text evidence="4">Belongs to the major facilitator superfamily. EmrB family.</text>
</comment>
<proteinExistence type="evidence at transcript level"/>
<protein>
    <recommendedName>
        <fullName evidence="4">Colistin resistance protein EmrB</fullName>
    </recommendedName>
</protein>
<name>EMRB_ACIBT</name>
<organism>
    <name type="scientific">Acinetobacter baumannii (strain ATCC 17978 / DSM 105126 / CIP 53.77 / LMG 1025 / NCDC KC755 / 5377)</name>
    <dbReference type="NCBI Taxonomy" id="400667"/>
    <lineage>
        <taxon>Bacteria</taxon>
        <taxon>Pseudomonadati</taxon>
        <taxon>Pseudomonadota</taxon>
        <taxon>Gammaproteobacteria</taxon>
        <taxon>Moraxellales</taxon>
        <taxon>Moraxellaceae</taxon>
        <taxon>Acinetobacter</taxon>
        <taxon>Acinetobacter calcoaceticus/baumannii complex</taxon>
    </lineage>
</organism>
<reference key="1">
    <citation type="journal article" date="2007" name="Genes Dev.">
        <title>New insights into Acinetobacter baumannii pathogenesis revealed by high-density pyrosequencing and transposon mutagenesis.</title>
        <authorList>
            <person name="Smith M.G."/>
            <person name="Gianoulis T.A."/>
            <person name="Pukatzki S."/>
            <person name="Mekalanos J.J."/>
            <person name="Ornston L.N."/>
            <person name="Gerstein M."/>
            <person name="Snyder M."/>
        </authorList>
    </citation>
    <scope>NUCLEOTIDE SEQUENCE [LARGE SCALE GENOMIC DNA]</scope>
    <source>
        <strain>ATCC 17978 / DSM 105126 / CIP 53.77 / LMG 1025 / NCDC KC755 / 5377</strain>
    </source>
</reference>
<reference key="2">
    <citation type="journal article" date="2017" name="J. Microbiol.">
        <title>Contribution of EmrAB efflux pumps to colistin resistance in Acinetobacter baumannii.</title>
        <authorList>
            <person name="Lin M.F."/>
            <person name="Lin Y.Y."/>
            <person name="Lan C.Y."/>
        </authorList>
    </citation>
    <scope>FUNCTION</scope>
    <scope>INDUCTION</scope>
    <scope>DISRUPTION PHENOTYPE</scope>
    <source>
        <strain>ATCC 17978 / DSM 105126 / CIP 53.77 / LMG 1025 / NCDC KC755 / 5377</strain>
    </source>
</reference>
<gene>
    <name evidence="3" type="primary">emrB</name>
    <name evidence="5" type="ordered locus">A1S_1772</name>
</gene>
<accession>P0DPR7</accession>
<evidence type="ECO:0000255" key="1"/>
<evidence type="ECO:0000269" key="2">
    <source>
    </source>
</evidence>
<evidence type="ECO:0000303" key="3">
    <source>
    </source>
</evidence>
<evidence type="ECO:0000305" key="4"/>
<evidence type="ECO:0000312" key="5">
    <source>
        <dbReference type="EMBL" id="ABO12199.2"/>
    </source>
</evidence>